<sequence length="626" mass="66510">MTTPSHLSDRYELGEILGFGGMSEVHLARDLRLHRDVAVKVLRADLARDPSFYLRFRREAQNAAALNHPAIVAVYDTGEAETPAGPLPYIVMEYVDGVTLRDIVHTEGPMTPKRAIEVIADACQALNFSHQNGIIHRDVKPANIMISATNAVKVMDFGIARAIADSGNSVTQTAAVIGTAQYLSPEQARGDSVDARSDVYSLGCVLYEVLTGEPPFTGDSPVSVAYQHVREDPIPPSARHEGLSADLDAVVLKALAKNPENRYQTAAEMRADLVRVHNGEPPEAPKVLTDAERTSLLSSAAGNLSGPRTDPLPRQDLDDTDRDRSIGSVGRWVAVVAVLAVLTVVVTIAINTFGGITRDVQVPDVRGQSSADAIATLQNRGFKIRTLQKPDSTIPPDHVIGTDPAANTSVSAGDEITVNVSTGPEQREIPDVSTLTYAEAVKKLTAAGFGRFKQANSPSTPELVGKVIGTNPPANQTSAITNVVIIIVGSGPATKDIPDVAGQTVDVAQKNLNVYGFTKFSQASVDSPRPAGEVTGTNPPAGTTVPVDSVIELQVSKGNQFVMPDLSGMFWVDAEPRLRALGWTGMLDKGADVDAGGSQHNRVVYQNPPAGTGVNRDGIITLRFGQ</sequence>
<feature type="chain" id="PRO_0000428053" description="Serine/threonine-protein kinase PknB">
    <location>
        <begin position="1"/>
        <end position="626"/>
    </location>
</feature>
<feature type="topological domain" description="Cytoplasmic" evidence="3">
    <location>
        <begin position="1"/>
        <end position="332"/>
    </location>
</feature>
<feature type="transmembrane region" description="Helical" evidence="3">
    <location>
        <begin position="333"/>
        <end position="353"/>
    </location>
</feature>
<feature type="topological domain" description="Extracellular" evidence="3">
    <location>
        <begin position="354"/>
        <end position="626"/>
    </location>
</feature>
<feature type="domain" description="Protein kinase" evidence="4">
    <location>
        <begin position="11"/>
        <end position="274"/>
    </location>
</feature>
<feature type="domain" description="PASTA 1" evidence="5">
    <location>
        <begin position="356"/>
        <end position="422"/>
    </location>
</feature>
<feature type="domain" description="PASTA 2" evidence="5">
    <location>
        <begin position="423"/>
        <end position="490"/>
    </location>
</feature>
<feature type="domain" description="PASTA 3" evidence="5">
    <location>
        <begin position="491"/>
        <end position="557"/>
    </location>
</feature>
<feature type="domain" description="PASTA 4" evidence="5">
    <location>
        <begin position="558"/>
        <end position="626"/>
    </location>
</feature>
<feature type="region of interest" description="Disordered" evidence="7">
    <location>
        <begin position="299"/>
        <end position="323"/>
    </location>
</feature>
<feature type="compositionally biased region" description="Basic and acidic residues" evidence="7">
    <location>
        <begin position="311"/>
        <end position="323"/>
    </location>
</feature>
<feature type="active site" description="Proton acceptor" evidence="4 6">
    <location>
        <position position="138"/>
    </location>
</feature>
<feature type="binding site" evidence="4">
    <location>
        <begin position="17"/>
        <end position="25"/>
    </location>
    <ligand>
        <name>ATP</name>
        <dbReference type="ChEBI" id="CHEBI:30616"/>
    </ligand>
</feature>
<feature type="binding site" evidence="4">
    <location>
        <position position="40"/>
    </location>
    <ligand>
        <name>ATP</name>
        <dbReference type="ChEBI" id="CHEBI:30616"/>
    </ligand>
</feature>
<feature type="binding site" evidence="4">
    <location>
        <begin position="93"/>
        <end position="95"/>
    </location>
    <ligand>
        <name>ATP</name>
        <dbReference type="ChEBI" id="CHEBI:30616"/>
    </ligand>
</feature>
<feature type="binding site" evidence="4">
    <location>
        <begin position="140"/>
        <end position="143"/>
    </location>
    <ligand>
        <name>ATP</name>
        <dbReference type="ChEBI" id="CHEBI:30616"/>
    </ligand>
</feature>
<feature type="binding site" evidence="1">
    <location>
        <position position="143"/>
    </location>
    <ligand>
        <name>Mg(2+)</name>
        <dbReference type="ChEBI" id="CHEBI:18420"/>
    </ligand>
</feature>
<feature type="binding site" evidence="4">
    <location>
        <position position="156"/>
    </location>
    <ligand>
        <name>ATP</name>
        <dbReference type="ChEBI" id="CHEBI:30616"/>
    </ligand>
</feature>
<feature type="binding site" evidence="1">
    <location>
        <position position="156"/>
    </location>
    <ligand>
        <name>Mg(2+)</name>
        <dbReference type="ChEBI" id="CHEBI:18420"/>
    </ligand>
</feature>
<feature type="modified residue" description="Phosphoserine; by autocatalysis" evidence="1">
    <location>
        <position position="166"/>
    </location>
</feature>
<feature type="modified residue" description="Phosphoserine; by autocatalysis" evidence="1">
    <location>
        <position position="169"/>
    </location>
</feature>
<feature type="modified residue" description="Phosphothreonine; by autocatalysis" evidence="1">
    <location>
        <position position="171"/>
    </location>
</feature>
<feature type="modified residue" description="Phosphothreonine; by autocatalysis" evidence="1">
    <location>
        <position position="173"/>
    </location>
</feature>
<feature type="modified residue" description="Phosphothreonine; by autocatalysis" evidence="1">
    <location>
        <position position="294"/>
    </location>
</feature>
<feature type="modified residue" description="Phosphoserine; by autocatalysis" evidence="1">
    <location>
        <position position="295"/>
    </location>
</feature>
<feature type="modified residue" description="Phosphothreonine; by autocatalysis" evidence="1">
    <location>
        <position position="309"/>
    </location>
</feature>
<keyword id="KW-0067">ATP-binding</keyword>
<keyword id="KW-1003">Cell membrane</keyword>
<keyword id="KW-0418">Kinase</keyword>
<keyword id="KW-0460">Magnesium</keyword>
<keyword id="KW-0472">Membrane</keyword>
<keyword id="KW-0479">Metal-binding</keyword>
<keyword id="KW-0547">Nucleotide-binding</keyword>
<keyword id="KW-0597">Phosphoprotein</keyword>
<keyword id="KW-1185">Reference proteome</keyword>
<keyword id="KW-0677">Repeat</keyword>
<keyword id="KW-0723">Serine/threonine-protein kinase</keyword>
<keyword id="KW-0808">Transferase</keyword>
<keyword id="KW-0812">Transmembrane</keyword>
<keyword id="KW-1133">Transmembrane helix</keyword>
<dbReference type="EC" id="2.7.11.1"/>
<dbReference type="EMBL" id="AE000516">
    <property type="protein sequence ID" value="AAK44239.1"/>
    <property type="molecule type" value="Genomic_DNA"/>
</dbReference>
<dbReference type="PIR" id="D70699">
    <property type="entry name" value="D70699"/>
</dbReference>
<dbReference type="RefSeq" id="WP_003400356.1">
    <property type="nucleotide sequence ID" value="NZ_KK341227.1"/>
</dbReference>
<dbReference type="SMR" id="P9WI80"/>
<dbReference type="GeneID" id="45423973"/>
<dbReference type="KEGG" id="mtc:MT0017"/>
<dbReference type="PATRIC" id="fig|83331.31.peg.18"/>
<dbReference type="HOGENOM" id="CLU_000288_135_2_11"/>
<dbReference type="Proteomes" id="UP000001020">
    <property type="component" value="Chromosome"/>
</dbReference>
<dbReference type="GO" id="GO:0005886">
    <property type="term" value="C:plasma membrane"/>
    <property type="evidence" value="ECO:0007669"/>
    <property type="project" value="UniProtKB-SubCell"/>
</dbReference>
<dbReference type="GO" id="GO:0005524">
    <property type="term" value="F:ATP binding"/>
    <property type="evidence" value="ECO:0007669"/>
    <property type="project" value="UniProtKB-KW"/>
</dbReference>
<dbReference type="GO" id="GO:0046872">
    <property type="term" value="F:metal ion binding"/>
    <property type="evidence" value="ECO:0007669"/>
    <property type="project" value="UniProtKB-KW"/>
</dbReference>
<dbReference type="GO" id="GO:0106310">
    <property type="term" value="F:protein serine kinase activity"/>
    <property type="evidence" value="ECO:0007669"/>
    <property type="project" value="RHEA"/>
</dbReference>
<dbReference type="GO" id="GO:0004674">
    <property type="term" value="F:protein serine/threonine kinase activity"/>
    <property type="evidence" value="ECO:0007669"/>
    <property type="project" value="UniProtKB-KW"/>
</dbReference>
<dbReference type="GO" id="GO:0080090">
    <property type="term" value="P:regulation of primary metabolic process"/>
    <property type="evidence" value="ECO:0007669"/>
    <property type="project" value="UniProtKB-ARBA"/>
</dbReference>
<dbReference type="CDD" id="cd06577">
    <property type="entry name" value="PASTA_pknB"/>
    <property type="match status" value="4"/>
</dbReference>
<dbReference type="CDD" id="cd14014">
    <property type="entry name" value="STKc_PknB_like"/>
    <property type="match status" value="1"/>
</dbReference>
<dbReference type="FunFam" id="1.10.510.10:FF:000021">
    <property type="entry name" value="Serine/threonine protein kinase"/>
    <property type="match status" value="1"/>
</dbReference>
<dbReference type="FunFam" id="3.30.200.20:FF:000035">
    <property type="entry name" value="Serine/threonine protein kinase Stk1"/>
    <property type="match status" value="1"/>
</dbReference>
<dbReference type="Gene3D" id="3.30.10.20">
    <property type="match status" value="4"/>
</dbReference>
<dbReference type="Gene3D" id="3.30.200.20">
    <property type="entry name" value="Phosphorylase Kinase, domain 1"/>
    <property type="match status" value="1"/>
</dbReference>
<dbReference type="Gene3D" id="1.10.510.10">
    <property type="entry name" value="Transferase(Phosphotransferase) domain 1"/>
    <property type="match status" value="1"/>
</dbReference>
<dbReference type="InterPro" id="IPR011009">
    <property type="entry name" value="Kinase-like_dom_sf"/>
</dbReference>
<dbReference type="InterPro" id="IPR005543">
    <property type="entry name" value="PASTA_dom"/>
</dbReference>
<dbReference type="InterPro" id="IPR000719">
    <property type="entry name" value="Prot_kinase_dom"/>
</dbReference>
<dbReference type="InterPro" id="IPR017441">
    <property type="entry name" value="Protein_kinase_ATP_BS"/>
</dbReference>
<dbReference type="InterPro" id="IPR008271">
    <property type="entry name" value="Ser/Thr_kinase_AS"/>
</dbReference>
<dbReference type="NCBIfam" id="NF033483">
    <property type="entry name" value="PknB_PASTA_kin"/>
    <property type="match status" value="1"/>
</dbReference>
<dbReference type="PANTHER" id="PTHR43289">
    <property type="entry name" value="MITOGEN-ACTIVATED PROTEIN KINASE KINASE KINASE 20-RELATED"/>
    <property type="match status" value="1"/>
</dbReference>
<dbReference type="PANTHER" id="PTHR43289:SF6">
    <property type="entry name" value="SERINE_THREONINE-PROTEIN KINASE NEKL-3"/>
    <property type="match status" value="1"/>
</dbReference>
<dbReference type="Pfam" id="PF03793">
    <property type="entry name" value="PASTA"/>
    <property type="match status" value="4"/>
</dbReference>
<dbReference type="Pfam" id="PF00069">
    <property type="entry name" value="Pkinase"/>
    <property type="match status" value="1"/>
</dbReference>
<dbReference type="SMART" id="SM00740">
    <property type="entry name" value="PASTA"/>
    <property type="match status" value="4"/>
</dbReference>
<dbReference type="SMART" id="SM00220">
    <property type="entry name" value="S_TKc"/>
    <property type="match status" value="1"/>
</dbReference>
<dbReference type="SUPFAM" id="SSF56112">
    <property type="entry name" value="Protein kinase-like (PK-like)"/>
    <property type="match status" value="1"/>
</dbReference>
<dbReference type="PROSITE" id="PS51178">
    <property type="entry name" value="PASTA"/>
    <property type="match status" value="4"/>
</dbReference>
<dbReference type="PROSITE" id="PS00107">
    <property type="entry name" value="PROTEIN_KINASE_ATP"/>
    <property type="match status" value="1"/>
</dbReference>
<dbReference type="PROSITE" id="PS50011">
    <property type="entry name" value="PROTEIN_KINASE_DOM"/>
    <property type="match status" value="1"/>
</dbReference>
<dbReference type="PROSITE" id="PS00108">
    <property type="entry name" value="PROTEIN_KINASE_ST"/>
    <property type="match status" value="1"/>
</dbReference>
<organism>
    <name type="scientific">Mycobacterium tuberculosis (strain CDC 1551 / Oshkosh)</name>
    <dbReference type="NCBI Taxonomy" id="83331"/>
    <lineage>
        <taxon>Bacteria</taxon>
        <taxon>Bacillati</taxon>
        <taxon>Actinomycetota</taxon>
        <taxon>Actinomycetes</taxon>
        <taxon>Mycobacteriales</taxon>
        <taxon>Mycobacteriaceae</taxon>
        <taxon>Mycobacterium</taxon>
        <taxon>Mycobacterium tuberculosis complex</taxon>
    </lineage>
</organism>
<accession>P9WI80</accession>
<accession>L0T5F6</accession>
<accession>P0A5S4</accession>
<accession>P71584</accession>
<proteinExistence type="inferred from homology"/>
<name>PKNB_MYCTO</name>
<protein>
    <recommendedName>
        <fullName>Serine/threonine-protein kinase PknB</fullName>
        <ecNumber>2.7.11.1</ecNumber>
    </recommendedName>
</protein>
<gene>
    <name type="primary">pknB</name>
    <name type="ordered locus">MT0017</name>
</gene>
<reference key="1">
    <citation type="journal article" date="2002" name="J. Bacteriol.">
        <title>Whole-genome comparison of Mycobacterium tuberculosis clinical and laboratory strains.</title>
        <authorList>
            <person name="Fleischmann R.D."/>
            <person name="Alland D."/>
            <person name="Eisen J.A."/>
            <person name="Carpenter L."/>
            <person name="White O."/>
            <person name="Peterson J.D."/>
            <person name="DeBoy R.T."/>
            <person name="Dodson R.J."/>
            <person name="Gwinn M.L."/>
            <person name="Haft D.H."/>
            <person name="Hickey E.K."/>
            <person name="Kolonay J.F."/>
            <person name="Nelson W.C."/>
            <person name="Umayam L.A."/>
            <person name="Ermolaeva M.D."/>
            <person name="Salzberg S.L."/>
            <person name="Delcher A."/>
            <person name="Utterback T.R."/>
            <person name="Weidman J.F."/>
            <person name="Khouri H.M."/>
            <person name="Gill J."/>
            <person name="Mikula A."/>
            <person name="Bishai W."/>
            <person name="Jacobs W.R. Jr."/>
            <person name="Venter J.C."/>
            <person name="Fraser C.M."/>
        </authorList>
    </citation>
    <scope>NUCLEOTIDE SEQUENCE [LARGE SCALE GENOMIC DNA]</scope>
    <source>
        <strain>CDC 1551 / Oshkosh</strain>
    </source>
</reference>
<evidence type="ECO:0000250" key="1"/>
<evidence type="ECO:0000250" key="2">
    <source>
        <dbReference type="UniProtKB" id="P9WI81"/>
    </source>
</evidence>
<evidence type="ECO:0000255" key="3"/>
<evidence type="ECO:0000255" key="4">
    <source>
        <dbReference type="PROSITE-ProRule" id="PRU00159"/>
    </source>
</evidence>
<evidence type="ECO:0000255" key="5">
    <source>
        <dbReference type="PROSITE-ProRule" id="PRU00528"/>
    </source>
</evidence>
<evidence type="ECO:0000255" key="6">
    <source>
        <dbReference type="PROSITE-ProRule" id="PRU10027"/>
    </source>
</evidence>
<evidence type="ECO:0000256" key="7">
    <source>
        <dbReference type="SAM" id="MobiDB-lite"/>
    </source>
</evidence>
<comment type="function">
    <text evidence="2">Protein kinase that regulates many aspects of mycobacterial physiology. Is a key component of a signal transduction pathway that regulates cell growth, cell shape and cell division via phosphorylation of target proteins.</text>
</comment>
<comment type="catalytic activity">
    <reaction>
        <text>L-seryl-[protein] + ATP = O-phospho-L-seryl-[protein] + ADP + H(+)</text>
        <dbReference type="Rhea" id="RHEA:17989"/>
        <dbReference type="Rhea" id="RHEA-COMP:9863"/>
        <dbReference type="Rhea" id="RHEA-COMP:11604"/>
        <dbReference type="ChEBI" id="CHEBI:15378"/>
        <dbReference type="ChEBI" id="CHEBI:29999"/>
        <dbReference type="ChEBI" id="CHEBI:30616"/>
        <dbReference type="ChEBI" id="CHEBI:83421"/>
        <dbReference type="ChEBI" id="CHEBI:456216"/>
        <dbReference type="EC" id="2.7.11.1"/>
    </reaction>
</comment>
<comment type="catalytic activity">
    <reaction>
        <text>L-threonyl-[protein] + ATP = O-phospho-L-threonyl-[protein] + ADP + H(+)</text>
        <dbReference type="Rhea" id="RHEA:46608"/>
        <dbReference type="Rhea" id="RHEA-COMP:11060"/>
        <dbReference type="Rhea" id="RHEA-COMP:11605"/>
        <dbReference type="ChEBI" id="CHEBI:15378"/>
        <dbReference type="ChEBI" id="CHEBI:30013"/>
        <dbReference type="ChEBI" id="CHEBI:30616"/>
        <dbReference type="ChEBI" id="CHEBI:61977"/>
        <dbReference type="ChEBI" id="CHEBI:456216"/>
        <dbReference type="EC" id="2.7.11.1"/>
    </reaction>
</comment>
<comment type="subunit">
    <text evidence="1">Homodimer.</text>
</comment>
<comment type="subcellular location">
    <subcellularLocation>
        <location evidence="1">Cell membrane</location>
        <topology evidence="1">Single-pass membrane protein</topology>
    </subcellularLocation>
    <text evidence="1">Localizes to septum and cell poles.</text>
</comment>
<comment type="domain">
    <text evidence="1">The PASTA domains interact with peptidoglycans and are required for PknB localization.</text>
</comment>
<comment type="PTM">
    <text evidence="1">Autophosphorylated. Dephosphorylated by PstP (By similarity).</text>
</comment>
<comment type="similarity">
    <text evidence="4">Belongs to the protein kinase superfamily. Ser/Thr protein kinase family.</text>
</comment>